<evidence type="ECO:0000255" key="1">
    <source>
        <dbReference type="HAMAP-Rule" id="MF_01703"/>
    </source>
</evidence>
<feature type="chain" id="PRO_0000092605" description="ATP-dependent lipid A-core flippase">
    <location>
        <begin position="1"/>
        <end position="581"/>
    </location>
</feature>
<feature type="transmembrane region" description="Helical" evidence="1">
    <location>
        <begin position="15"/>
        <end position="35"/>
    </location>
</feature>
<feature type="transmembrane region" description="Helical" evidence="1">
    <location>
        <begin position="62"/>
        <end position="82"/>
    </location>
</feature>
<feature type="transmembrane region" description="Helical" evidence="1">
    <location>
        <begin position="152"/>
        <end position="172"/>
    </location>
</feature>
<feature type="transmembrane region" description="Helical" evidence="1">
    <location>
        <begin position="252"/>
        <end position="272"/>
    </location>
</feature>
<feature type="transmembrane region" description="Helical" evidence="1">
    <location>
        <begin position="274"/>
        <end position="294"/>
    </location>
</feature>
<feature type="domain" description="ABC transmembrane type-1" evidence="1">
    <location>
        <begin position="27"/>
        <end position="309"/>
    </location>
</feature>
<feature type="domain" description="ABC transporter" evidence="1">
    <location>
        <begin position="341"/>
        <end position="577"/>
    </location>
</feature>
<feature type="binding site" evidence="1">
    <location>
        <begin position="375"/>
        <end position="382"/>
    </location>
    <ligand>
        <name>ATP</name>
        <dbReference type="ChEBI" id="CHEBI:30616"/>
    </ligand>
</feature>
<name>MSBA_WIGBR</name>
<proteinExistence type="inferred from homology"/>
<comment type="function">
    <text evidence="1">Involved in lipopolysaccharide (LPS) biosynthesis. Translocates lipid A-core from the inner to the outer leaflet of the inner membrane. Transmembrane domains (TMD) form a pore in the inner membrane and the ATP-binding domain (NBD) is responsible for energy generation.</text>
</comment>
<comment type="catalytic activity">
    <reaction evidence="1">
        <text>ATP + H2O + lipid A-core oligosaccharideSide 1 = ADP + phosphate + lipid A-core oligosaccharideSide 2.</text>
        <dbReference type="EC" id="7.5.2.6"/>
    </reaction>
</comment>
<comment type="subunit">
    <text evidence="1">Homodimer.</text>
</comment>
<comment type="subcellular location">
    <subcellularLocation>
        <location evidence="1">Cell membrane</location>
        <topology evidence="1">Multi-pass membrane protein</topology>
    </subcellularLocation>
</comment>
<comment type="domain">
    <text evidence="1">In MsbA the ATP-binding domain (NBD) and the transmembrane domain (TMD) are fused.</text>
</comment>
<comment type="similarity">
    <text evidence="1">Belongs to the ABC transporter superfamily. Lipid exporter (TC 3.A.1.106) family.</text>
</comment>
<sequence length="581" mass="65725">MLKKNFSTWRIFCRLWPIISPFKSGLIISIVALIINATSDTLMLSLLKPLLDNGFKSSENKISIWMPLAIVALMLSRGSSGFISSYFISWVSGKVVMNIRRNLFRHMMNMPVSFFDKRSTGALLSRITYDTEQVASSSSSVLITIVREGSLIIGLFFMMFFHSWKLSSVLIIITPIVFFSINQVSKRFRKINKKIQNNMGQVNFIVEQMLKGHKEIRIFGGQKEEIDRFNYVSNFIRQQSMKIVISSSTLDIIIQFISSITLAVILYISSLPKIIDELTAGTITVIFTSMIALMRPLKSLTNVNANFQKGMVACKTLFSIFDIKQEQDIGKCYINRARGEIKFKNITFTYPGKENPSLKDINIKISAGCTVALIGSSGAGKSTIVNLLTRFYEADKGSIFLDNINLKKYKLSNLRNQIALVSQNIYLFNDTIANNIAYAKKKIYSKYQIEKAAYMAYAMDFIIKMKHGLNTIIGENGTLLSGGQRQRIAIARALLRDCPILILDEATSALDIESEIKVQKAIDKIRKNRTSLVIAHRISTIKKSDMILLVEKGKIIEYGNHNELIEKKGVYAQIYRLQLDQ</sequence>
<protein>
    <recommendedName>
        <fullName evidence="1">ATP-dependent lipid A-core flippase</fullName>
        <ecNumber evidence="1">7.5.2.6</ecNumber>
    </recommendedName>
    <alternativeName>
        <fullName evidence="1">Lipid A export ATP-binding/permease protein MsbA</fullName>
    </alternativeName>
</protein>
<gene>
    <name evidence="1" type="primary">msbA</name>
    <name type="ordered locus">WIGBR2540</name>
</gene>
<organism>
    <name type="scientific">Wigglesworthia glossinidia brevipalpis</name>
    <dbReference type="NCBI Taxonomy" id="36870"/>
    <lineage>
        <taxon>Bacteria</taxon>
        <taxon>Pseudomonadati</taxon>
        <taxon>Pseudomonadota</taxon>
        <taxon>Gammaproteobacteria</taxon>
        <taxon>Enterobacterales</taxon>
        <taxon>Erwiniaceae</taxon>
        <taxon>Wigglesworthia</taxon>
    </lineage>
</organism>
<dbReference type="EC" id="7.5.2.6" evidence="1"/>
<dbReference type="EMBL" id="BA000021">
    <property type="protein sequence ID" value="BAC24400.1"/>
    <property type="molecule type" value="Genomic_DNA"/>
</dbReference>
<dbReference type="SMR" id="Q8D2U8"/>
<dbReference type="STRING" id="36870.gene:10368747"/>
<dbReference type="KEGG" id="wbr:msbA"/>
<dbReference type="eggNOG" id="COG1132">
    <property type="taxonomic scope" value="Bacteria"/>
</dbReference>
<dbReference type="HOGENOM" id="CLU_000604_84_7_6"/>
<dbReference type="OrthoDB" id="9806127at2"/>
<dbReference type="Proteomes" id="UP000000562">
    <property type="component" value="Chromosome"/>
</dbReference>
<dbReference type="GO" id="GO:0005886">
    <property type="term" value="C:plasma membrane"/>
    <property type="evidence" value="ECO:0007669"/>
    <property type="project" value="UniProtKB-SubCell"/>
</dbReference>
<dbReference type="GO" id="GO:0015421">
    <property type="term" value="F:ABC-type oligopeptide transporter activity"/>
    <property type="evidence" value="ECO:0007669"/>
    <property type="project" value="TreeGrafter"/>
</dbReference>
<dbReference type="GO" id="GO:0005524">
    <property type="term" value="F:ATP binding"/>
    <property type="evidence" value="ECO:0007669"/>
    <property type="project" value="UniProtKB-KW"/>
</dbReference>
<dbReference type="GO" id="GO:0016887">
    <property type="term" value="F:ATP hydrolysis activity"/>
    <property type="evidence" value="ECO:0007669"/>
    <property type="project" value="InterPro"/>
</dbReference>
<dbReference type="GO" id="GO:0034040">
    <property type="term" value="F:ATPase-coupled lipid transmembrane transporter activity"/>
    <property type="evidence" value="ECO:0007669"/>
    <property type="project" value="InterPro"/>
</dbReference>
<dbReference type="CDD" id="cd18552">
    <property type="entry name" value="ABC_6TM_MsbA_like"/>
    <property type="match status" value="1"/>
</dbReference>
<dbReference type="FunFam" id="3.40.50.300:FF:000140">
    <property type="entry name" value="Lipid A export ATP-binding/permease protein MsbA"/>
    <property type="match status" value="1"/>
</dbReference>
<dbReference type="Gene3D" id="1.20.1560.10">
    <property type="entry name" value="ABC transporter type 1, transmembrane domain"/>
    <property type="match status" value="1"/>
</dbReference>
<dbReference type="Gene3D" id="3.40.50.300">
    <property type="entry name" value="P-loop containing nucleotide triphosphate hydrolases"/>
    <property type="match status" value="1"/>
</dbReference>
<dbReference type="InterPro" id="IPR003593">
    <property type="entry name" value="AAA+_ATPase"/>
</dbReference>
<dbReference type="InterPro" id="IPR011527">
    <property type="entry name" value="ABC1_TM_dom"/>
</dbReference>
<dbReference type="InterPro" id="IPR036640">
    <property type="entry name" value="ABC1_TM_sf"/>
</dbReference>
<dbReference type="InterPro" id="IPR003439">
    <property type="entry name" value="ABC_transporter-like_ATP-bd"/>
</dbReference>
<dbReference type="InterPro" id="IPR017871">
    <property type="entry name" value="ABC_transporter-like_CS"/>
</dbReference>
<dbReference type="InterPro" id="IPR011917">
    <property type="entry name" value="ABC_transpr_lipidA"/>
</dbReference>
<dbReference type="InterPro" id="IPR027417">
    <property type="entry name" value="P-loop_NTPase"/>
</dbReference>
<dbReference type="InterPro" id="IPR039421">
    <property type="entry name" value="Type_1_exporter"/>
</dbReference>
<dbReference type="NCBIfam" id="TIGR02203">
    <property type="entry name" value="MsbA_lipidA"/>
    <property type="match status" value="1"/>
</dbReference>
<dbReference type="NCBIfam" id="NF008381">
    <property type="entry name" value="PRK11176.1"/>
    <property type="match status" value="1"/>
</dbReference>
<dbReference type="PANTHER" id="PTHR43394:SF1">
    <property type="entry name" value="ATP-BINDING CASSETTE SUB-FAMILY B MEMBER 10, MITOCHONDRIAL"/>
    <property type="match status" value="1"/>
</dbReference>
<dbReference type="PANTHER" id="PTHR43394">
    <property type="entry name" value="ATP-DEPENDENT PERMEASE MDL1, MITOCHONDRIAL"/>
    <property type="match status" value="1"/>
</dbReference>
<dbReference type="Pfam" id="PF00664">
    <property type="entry name" value="ABC_membrane"/>
    <property type="match status" value="1"/>
</dbReference>
<dbReference type="Pfam" id="PF00005">
    <property type="entry name" value="ABC_tran"/>
    <property type="match status" value="1"/>
</dbReference>
<dbReference type="SMART" id="SM00382">
    <property type="entry name" value="AAA"/>
    <property type="match status" value="1"/>
</dbReference>
<dbReference type="SUPFAM" id="SSF90123">
    <property type="entry name" value="ABC transporter transmembrane region"/>
    <property type="match status" value="1"/>
</dbReference>
<dbReference type="SUPFAM" id="SSF52540">
    <property type="entry name" value="P-loop containing nucleoside triphosphate hydrolases"/>
    <property type="match status" value="1"/>
</dbReference>
<dbReference type="PROSITE" id="PS50929">
    <property type="entry name" value="ABC_TM1F"/>
    <property type="match status" value="1"/>
</dbReference>
<dbReference type="PROSITE" id="PS00211">
    <property type="entry name" value="ABC_TRANSPORTER_1"/>
    <property type="match status" value="1"/>
</dbReference>
<dbReference type="PROSITE" id="PS50893">
    <property type="entry name" value="ABC_TRANSPORTER_2"/>
    <property type="match status" value="1"/>
</dbReference>
<dbReference type="PROSITE" id="PS51239">
    <property type="entry name" value="MSBA"/>
    <property type="match status" value="1"/>
</dbReference>
<reference key="1">
    <citation type="journal article" date="2002" name="Nat. Genet.">
        <title>Genome sequence of the endocellular obligate symbiont of tsetse flies, Wigglesworthia glossinidia.</title>
        <authorList>
            <person name="Akman L."/>
            <person name="Yamashita A."/>
            <person name="Watanabe H."/>
            <person name="Oshima K."/>
            <person name="Shiba T."/>
            <person name="Hattori M."/>
            <person name="Aksoy S."/>
        </authorList>
    </citation>
    <scope>NUCLEOTIDE SEQUENCE [LARGE SCALE GENOMIC DNA]</scope>
</reference>
<accession>Q8D2U8</accession>
<keyword id="KW-0067">ATP-binding</keyword>
<keyword id="KW-1003">Cell membrane</keyword>
<keyword id="KW-0445">Lipid transport</keyword>
<keyword id="KW-0472">Membrane</keyword>
<keyword id="KW-0547">Nucleotide-binding</keyword>
<keyword id="KW-1185">Reference proteome</keyword>
<keyword id="KW-1278">Translocase</keyword>
<keyword id="KW-0812">Transmembrane</keyword>
<keyword id="KW-1133">Transmembrane helix</keyword>
<keyword id="KW-0813">Transport</keyword>